<accession>Q2V2T9</accession>
<sequence>MQIPTLIDSMANKLHKKPPPLLKLTVIASDAEFHPPPLLGISYEELGSKLVNFATTRNVAMEFRIISSSYSDGLSSLIEQLRIDPFVFNEALVVNCHMMLHYIPDEILTSNLRSVFLKELRDLNPTIVTLIDEDSDFTSTNFISRLRSLYNYMWIPYDTAEMFLTRGSEQRQWYEADISWKIDNVVAKEGAERVERLEPKSR</sequence>
<feature type="chain" id="PRO_0000350858" description="Putative scarecrow-like protein 16">
    <location>
        <begin position="1"/>
        <end position="202"/>
    </location>
</feature>
<feature type="domain" description="GRAS" evidence="2">
    <location>
        <begin position="1"/>
        <end position="202"/>
    </location>
</feature>
<feature type="region of interest" description="VHIID" evidence="2">
    <location>
        <begin position="1"/>
        <end position="26"/>
    </location>
</feature>
<feature type="region of interest" description="Leucine repeat II (LRII)" evidence="2">
    <location>
        <begin position="45"/>
        <end position="82"/>
    </location>
</feature>
<feature type="region of interest" description="PFYRE" evidence="2">
    <location>
        <begin position="92"/>
        <end position="184"/>
    </location>
</feature>
<feature type="region of interest" description="SAW" evidence="2">
    <location>
        <begin position="187"/>
        <end position="202"/>
    </location>
</feature>
<keyword id="KW-0539">Nucleus</keyword>
<keyword id="KW-1185">Reference proteome</keyword>
<keyword id="KW-0804">Transcription</keyword>
<keyword id="KW-0805">Transcription regulation</keyword>
<gene>
    <name type="primary">SCL16</name>
    <name type="ordered locus">At5g67411</name>
    <name type="ORF">K8K14</name>
</gene>
<evidence type="ECO:0000250" key="1"/>
<evidence type="ECO:0000255" key="2">
    <source>
        <dbReference type="PROSITE-ProRule" id="PRU01191"/>
    </source>
</evidence>
<evidence type="ECO:0000269" key="3">
    <source>
    </source>
</evidence>
<evidence type="ECO:0000305" key="4"/>
<reference key="1">
    <citation type="journal article" date="1997" name="DNA Res.">
        <title>Structural analysis of Arabidopsis thaliana chromosome 5. III. Sequence features of the regions of 1,191,918 bp covered by seventeen physically assigned P1 clones.</title>
        <authorList>
            <person name="Nakamura Y."/>
            <person name="Sato S."/>
            <person name="Kaneko T."/>
            <person name="Kotani H."/>
            <person name="Asamizu E."/>
            <person name="Miyajima N."/>
            <person name="Tabata S."/>
        </authorList>
    </citation>
    <scope>NUCLEOTIDE SEQUENCE [LARGE SCALE GENOMIC DNA]</scope>
    <source>
        <strain>cv. Columbia</strain>
    </source>
</reference>
<reference key="2">
    <citation type="journal article" date="2017" name="Plant J.">
        <title>Araport11: a complete reannotation of the Arabidopsis thaliana reference genome.</title>
        <authorList>
            <person name="Cheng C.Y."/>
            <person name="Krishnakumar V."/>
            <person name="Chan A.P."/>
            <person name="Thibaud-Nissen F."/>
            <person name="Schobel S."/>
            <person name="Town C.D."/>
        </authorList>
    </citation>
    <scope>GENOME REANNOTATION</scope>
    <source>
        <strain>cv. Columbia</strain>
    </source>
</reference>
<reference key="3">
    <citation type="journal article" date="2006" name="Plant Biotechnol. J.">
        <title>Simultaneous high-throughput recombinational cloning of open reading frames in closed and open configurations.</title>
        <authorList>
            <person name="Underwood B.A."/>
            <person name="Vanderhaeghen R."/>
            <person name="Whitford R."/>
            <person name="Town C.D."/>
            <person name="Hilson P."/>
        </authorList>
    </citation>
    <scope>NUCLEOTIDE SEQUENCE [LARGE SCALE MRNA]</scope>
    <source>
        <strain>cv. Columbia</strain>
    </source>
</reference>
<reference key="4">
    <citation type="journal article" date="2004" name="Plant Mol. Biol.">
        <title>Genome-wide analysis of the GRAS gene family in rice and Arabidopsis.</title>
        <authorList>
            <person name="Tian C."/>
            <person name="Wan P."/>
            <person name="Sun S."/>
            <person name="Li J."/>
            <person name="Chen M."/>
        </authorList>
    </citation>
    <scope>GENE FAMILY</scope>
</reference>
<reference key="5">
    <citation type="journal article" date="2008" name="Plant Mol. Biol.">
        <title>Large-scale analysis of the GRAS gene family in Arabidopsis thaliana.</title>
        <authorList>
            <person name="Lee M.-H."/>
            <person name="Kim B."/>
            <person name="Song S.-K."/>
            <person name="Heo J.-O."/>
            <person name="Yu N.-I."/>
            <person name="Lee S.A."/>
            <person name="Kim M."/>
            <person name="Kim D.G."/>
            <person name="Sohn S.O."/>
            <person name="Lim C.E."/>
            <person name="Chang K.S."/>
            <person name="Lee M.M."/>
            <person name="Lim J."/>
        </authorList>
    </citation>
    <scope>GENE FAMILY</scope>
    <scope>TISSUE SPECIFICITY</scope>
</reference>
<proteinExistence type="uncertain"/>
<protein>
    <recommendedName>
        <fullName>Putative scarecrow-like protein 16</fullName>
        <shortName>AtSCL16</shortName>
    </recommendedName>
</protein>
<name>SCL16_ARATH</name>
<dbReference type="EMBL" id="AB007645">
    <property type="status" value="NOT_ANNOTATED_CDS"/>
    <property type="molecule type" value="Genomic_DNA"/>
</dbReference>
<dbReference type="EMBL" id="CP002688">
    <property type="protein sequence ID" value="AED98341.1"/>
    <property type="molecule type" value="Genomic_DNA"/>
</dbReference>
<dbReference type="EMBL" id="DQ487622">
    <property type="protein sequence ID" value="ABF59252.1"/>
    <property type="molecule type" value="mRNA"/>
</dbReference>
<dbReference type="RefSeq" id="NP_001032167.1">
    <property type="nucleotide sequence ID" value="NM_001037090.2"/>
</dbReference>
<dbReference type="SMR" id="Q2V2T9"/>
<dbReference type="BioGRID" id="531935">
    <property type="interactions" value="4"/>
</dbReference>
<dbReference type="IntAct" id="Q2V2T9">
    <property type="interactions" value="4"/>
</dbReference>
<dbReference type="STRING" id="3702.Q2V2T9"/>
<dbReference type="PaxDb" id="3702-AT5G67411.1"/>
<dbReference type="EnsemblPlants" id="AT5G67411.1">
    <property type="protein sequence ID" value="AT5G67411.1"/>
    <property type="gene ID" value="AT5G67411"/>
</dbReference>
<dbReference type="GeneID" id="3771574"/>
<dbReference type="Gramene" id="AT5G67411.1">
    <property type="protein sequence ID" value="AT5G67411.1"/>
    <property type="gene ID" value="AT5G67411"/>
</dbReference>
<dbReference type="KEGG" id="ath:AT5G67411"/>
<dbReference type="Araport" id="AT5G67411"/>
<dbReference type="TAIR" id="AT5G67411"/>
<dbReference type="eggNOG" id="ENOG502QR1S">
    <property type="taxonomic scope" value="Eukaryota"/>
</dbReference>
<dbReference type="HOGENOM" id="CLU_011924_5_0_1"/>
<dbReference type="InParanoid" id="Q2V2T9"/>
<dbReference type="PhylomeDB" id="Q2V2T9"/>
<dbReference type="Proteomes" id="UP000006548">
    <property type="component" value="Chromosome 5"/>
</dbReference>
<dbReference type="ExpressionAtlas" id="Q2V2T9">
    <property type="expression patterns" value="baseline and differential"/>
</dbReference>
<dbReference type="GO" id="GO:0005634">
    <property type="term" value="C:nucleus"/>
    <property type="evidence" value="ECO:0007669"/>
    <property type="project" value="UniProtKB-SubCell"/>
</dbReference>
<dbReference type="InterPro" id="IPR005202">
    <property type="entry name" value="TF_GRAS"/>
</dbReference>
<dbReference type="PANTHER" id="PTHR31636">
    <property type="entry name" value="OSJNBA0084A10.13 PROTEIN-RELATED"/>
    <property type="match status" value="1"/>
</dbReference>
<dbReference type="Pfam" id="PF03514">
    <property type="entry name" value="GRAS"/>
    <property type="match status" value="1"/>
</dbReference>
<dbReference type="PROSITE" id="PS50985">
    <property type="entry name" value="GRAS"/>
    <property type="match status" value="1"/>
</dbReference>
<organism>
    <name type="scientific">Arabidopsis thaliana</name>
    <name type="common">Mouse-ear cress</name>
    <dbReference type="NCBI Taxonomy" id="3702"/>
    <lineage>
        <taxon>Eukaryota</taxon>
        <taxon>Viridiplantae</taxon>
        <taxon>Streptophyta</taxon>
        <taxon>Embryophyta</taxon>
        <taxon>Tracheophyta</taxon>
        <taxon>Spermatophyta</taxon>
        <taxon>Magnoliopsida</taxon>
        <taxon>eudicotyledons</taxon>
        <taxon>Gunneridae</taxon>
        <taxon>Pentapetalae</taxon>
        <taxon>rosids</taxon>
        <taxon>malvids</taxon>
        <taxon>Brassicales</taxon>
        <taxon>Brassicaceae</taxon>
        <taxon>Camelineae</taxon>
        <taxon>Arabidopsis</taxon>
    </lineage>
</organism>
<comment type="function">
    <text evidence="1">Probable transcription factor involved in plant development.</text>
</comment>
<comment type="subcellular location">
    <subcellularLocation>
        <location evidence="4">Nucleus</location>
    </subcellularLocation>
</comment>
<comment type="tissue specificity">
    <text evidence="3">Expressed in seedlings, leaves and flowers.</text>
</comment>
<comment type="similarity">
    <text evidence="4">Belongs to the GRAS family.</text>
</comment>
<comment type="caution">
    <text evidence="4">Lacks the VHIID motif which is one of the conserved features of the GRAS family.</text>
</comment>
<comment type="caution">
    <text evidence="4">Could be the product of a pseudogene.</text>
</comment>